<keyword id="KW-0326">Glycosidase</keyword>
<keyword id="KW-0378">Hydrolase</keyword>
<keyword id="KW-0574">Periplasm</keyword>
<keyword id="KW-0732">Signal</keyword>
<name>TREA_SALPB</name>
<dbReference type="EC" id="3.2.1.28" evidence="1"/>
<dbReference type="EMBL" id="CP000886">
    <property type="protein sequence ID" value="ABX66830.1"/>
    <property type="molecule type" value="Genomic_DNA"/>
</dbReference>
<dbReference type="RefSeq" id="WP_000612826.1">
    <property type="nucleotide sequence ID" value="NC_010102.1"/>
</dbReference>
<dbReference type="SMR" id="A9MVX4"/>
<dbReference type="CAZy" id="GH37">
    <property type="family name" value="Glycoside Hydrolase Family 37"/>
</dbReference>
<dbReference type="KEGG" id="spq:SPAB_01423"/>
<dbReference type="PATRIC" id="fig|1016998.12.peg.1342"/>
<dbReference type="HOGENOM" id="CLU_006451_3_1_6"/>
<dbReference type="BioCyc" id="SENT1016998:SPAB_RS05830-MONOMER"/>
<dbReference type="Proteomes" id="UP000008556">
    <property type="component" value="Chromosome"/>
</dbReference>
<dbReference type="GO" id="GO:0042597">
    <property type="term" value="C:periplasmic space"/>
    <property type="evidence" value="ECO:0007669"/>
    <property type="project" value="UniProtKB-SubCell"/>
</dbReference>
<dbReference type="GO" id="GO:0004555">
    <property type="term" value="F:alpha,alpha-trehalase activity"/>
    <property type="evidence" value="ECO:0007669"/>
    <property type="project" value="UniProtKB-UniRule"/>
</dbReference>
<dbReference type="GO" id="GO:0071474">
    <property type="term" value="P:cellular hyperosmotic response"/>
    <property type="evidence" value="ECO:0007669"/>
    <property type="project" value="InterPro"/>
</dbReference>
<dbReference type="GO" id="GO:0005993">
    <property type="term" value="P:trehalose catabolic process"/>
    <property type="evidence" value="ECO:0007669"/>
    <property type="project" value="InterPro"/>
</dbReference>
<dbReference type="FunFam" id="1.50.10.10:FF:000003">
    <property type="entry name" value="Cytoplasmic trehalase"/>
    <property type="match status" value="1"/>
</dbReference>
<dbReference type="Gene3D" id="1.50.10.10">
    <property type="match status" value="1"/>
</dbReference>
<dbReference type="HAMAP" id="MF_01060">
    <property type="entry name" value="Peripl_trehalase"/>
    <property type="match status" value="1"/>
</dbReference>
<dbReference type="InterPro" id="IPR008928">
    <property type="entry name" value="6-hairpin_glycosidase_sf"/>
</dbReference>
<dbReference type="InterPro" id="IPR012341">
    <property type="entry name" value="6hp_glycosidase-like_sf"/>
</dbReference>
<dbReference type="InterPro" id="IPR001661">
    <property type="entry name" value="Glyco_hydro_37"/>
</dbReference>
<dbReference type="InterPro" id="IPR018232">
    <property type="entry name" value="Glyco_hydro_37_CS"/>
</dbReference>
<dbReference type="InterPro" id="IPR023720">
    <property type="entry name" value="Trehalase_periplasmic"/>
</dbReference>
<dbReference type="NCBIfam" id="NF009773">
    <property type="entry name" value="PRK13270.1"/>
    <property type="match status" value="1"/>
</dbReference>
<dbReference type="NCBIfam" id="NF009774">
    <property type="entry name" value="PRK13271.1"/>
    <property type="match status" value="1"/>
</dbReference>
<dbReference type="PANTHER" id="PTHR23403">
    <property type="entry name" value="TREHALASE"/>
    <property type="match status" value="1"/>
</dbReference>
<dbReference type="PANTHER" id="PTHR23403:SF1">
    <property type="entry name" value="TREHALASE"/>
    <property type="match status" value="1"/>
</dbReference>
<dbReference type="Pfam" id="PF01204">
    <property type="entry name" value="Trehalase"/>
    <property type="match status" value="1"/>
</dbReference>
<dbReference type="PRINTS" id="PR00744">
    <property type="entry name" value="GLHYDRLASE37"/>
</dbReference>
<dbReference type="SUPFAM" id="SSF48208">
    <property type="entry name" value="Six-hairpin glycosidases"/>
    <property type="match status" value="1"/>
</dbReference>
<dbReference type="PROSITE" id="PS00927">
    <property type="entry name" value="TREHALASE_1"/>
    <property type="match status" value="1"/>
</dbReference>
<dbReference type="PROSITE" id="PS00928">
    <property type="entry name" value="TREHALASE_2"/>
    <property type="match status" value="1"/>
</dbReference>
<accession>A9MVX4</accession>
<comment type="function">
    <text evidence="1">Provides the cells with the ability to utilize trehalose at high osmolarity by splitting it into glucose molecules that can subsequently be taken up by the phosphotransferase-mediated uptake system.</text>
</comment>
<comment type="catalytic activity">
    <reaction evidence="1">
        <text>alpha,alpha-trehalose + H2O = alpha-D-glucose + beta-D-glucose</text>
        <dbReference type="Rhea" id="RHEA:32675"/>
        <dbReference type="ChEBI" id="CHEBI:15377"/>
        <dbReference type="ChEBI" id="CHEBI:15903"/>
        <dbReference type="ChEBI" id="CHEBI:16551"/>
        <dbReference type="ChEBI" id="CHEBI:17925"/>
        <dbReference type="EC" id="3.2.1.28"/>
    </reaction>
</comment>
<comment type="subunit">
    <text evidence="1">Monomer.</text>
</comment>
<comment type="subcellular location">
    <subcellularLocation>
        <location evidence="1">Periplasm</location>
    </subcellularLocation>
</comment>
<comment type="similarity">
    <text evidence="1">Belongs to the glycosyl hydrolase 37 family.</text>
</comment>
<evidence type="ECO:0000255" key="1">
    <source>
        <dbReference type="HAMAP-Rule" id="MF_01060"/>
    </source>
</evidence>
<evidence type="ECO:0000256" key="2">
    <source>
        <dbReference type="SAM" id="MobiDB-lite"/>
    </source>
</evidence>
<feature type="signal peptide" evidence="1">
    <location>
        <begin position="1"/>
        <end position="34"/>
    </location>
</feature>
<feature type="chain" id="PRO_1000084459" description="Periplasmic trehalase">
    <location>
        <begin position="35"/>
        <end position="570"/>
    </location>
</feature>
<feature type="region of interest" description="Disordered" evidence="2">
    <location>
        <begin position="544"/>
        <end position="570"/>
    </location>
</feature>
<feature type="compositionally biased region" description="Low complexity" evidence="2">
    <location>
        <begin position="554"/>
        <end position="570"/>
    </location>
</feature>
<feature type="active site" description="Proton donor/acceptor" evidence="1">
    <location>
        <position position="319"/>
    </location>
</feature>
<feature type="active site" description="Proton donor/acceptor" evidence="1">
    <location>
        <position position="503"/>
    </location>
</feature>
<feature type="binding site" evidence="1">
    <location>
        <position position="159"/>
    </location>
    <ligand>
        <name>substrate</name>
    </ligand>
</feature>
<feature type="binding site" evidence="1">
    <location>
        <begin position="166"/>
        <end position="167"/>
    </location>
    <ligand>
        <name>substrate</name>
    </ligand>
</feature>
<feature type="binding site" evidence="1">
    <location>
        <position position="203"/>
    </location>
    <ligand>
        <name>substrate</name>
    </ligand>
</feature>
<feature type="binding site" evidence="1">
    <location>
        <begin position="212"/>
        <end position="214"/>
    </location>
    <ligand>
        <name>substrate</name>
    </ligand>
</feature>
<feature type="binding site" evidence="1">
    <location>
        <begin position="284"/>
        <end position="286"/>
    </location>
    <ligand>
        <name>substrate</name>
    </ligand>
</feature>
<feature type="binding site" evidence="1">
    <location>
        <position position="317"/>
    </location>
    <ligand>
        <name>substrate</name>
    </ligand>
</feature>
<feature type="binding site" evidence="1">
    <location>
        <position position="518"/>
    </location>
    <ligand>
        <name>substrate</name>
    </ligand>
</feature>
<sequence>MIPPEIRRSVLLQKAIKLALAGTLLTFASFSATAADPSSDTETPQPPDILLGPLFNDVQNAKLFPDQKTFADAIPNSDPLMILADYRMQRNQSGFDLRHFVDVNFTLPKAGEKYVPPAGQSLREHIDGLWPVLTRSTKNVEKWDSLLPLPESYVVPGGRFREIYYWDSYFTMLGLAESGHWDKVADMVANFGYEIDAWGHIPNGNRTYYLSRSQPPFFAFMVELLAQHEGDDALKEYLPQLQKEYAYWMEGVETLQPGQQNQRVVKLEDGSVLNRYWDDRDTPRPESWVEDIATAKSNPNRPATEIYRDLRSAAASGWDFSSRWMDNPQQLSTIRTTTIVPVDLNALLYQLEKTLARASAAAGDRAKASHYDALANARQQAIEMHLWNNKEGWYADYDLKNNKIRDQLTAAALFPLYVNAAAKDRAAKVAAAAQAHLLQPGGLATTSVKSGQQWDAPNGWAPLQWVAAEGLQNYGQDDVAMEVTWRFLTNVQHTYDREKKLVEKYDVSSTGTGGGGGEYPLQDGFGWTNGVTLKMLDLICPQEKPCDSVPSTRPASLSATPTKTPSAATQ</sequence>
<proteinExistence type="inferred from homology"/>
<organism>
    <name type="scientific">Salmonella paratyphi B (strain ATCC BAA-1250 / SPB7)</name>
    <dbReference type="NCBI Taxonomy" id="1016998"/>
    <lineage>
        <taxon>Bacteria</taxon>
        <taxon>Pseudomonadati</taxon>
        <taxon>Pseudomonadota</taxon>
        <taxon>Gammaproteobacteria</taxon>
        <taxon>Enterobacterales</taxon>
        <taxon>Enterobacteriaceae</taxon>
        <taxon>Salmonella</taxon>
    </lineage>
</organism>
<gene>
    <name evidence="1" type="primary">treA</name>
    <name type="ordered locus">SPAB_01423</name>
</gene>
<protein>
    <recommendedName>
        <fullName evidence="1">Periplasmic trehalase</fullName>
        <ecNumber evidence="1">3.2.1.28</ecNumber>
    </recommendedName>
    <alternativeName>
        <fullName evidence="1">Alpha,alpha-trehalase</fullName>
    </alternativeName>
    <alternativeName>
        <fullName evidence="1">Alpha,alpha-trehalose glucohydrolase</fullName>
    </alternativeName>
</protein>
<reference key="1">
    <citation type="submission" date="2007-11" db="EMBL/GenBank/DDBJ databases">
        <authorList>
            <consortium name="The Salmonella enterica serovar Paratyphi B Genome Sequencing Project"/>
            <person name="McClelland M."/>
            <person name="Sanderson E.K."/>
            <person name="Porwollik S."/>
            <person name="Spieth J."/>
            <person name="Clifton W.S."/>
            <person name="Fulton R."/>
            <person name="Cordes M."/>
            <person name="Wollam A."/>
            <person name="Shah N."/>
            <person name="Pepin K."/>
            <person name="Bhonagiri V."/>
            <person name="Nash W."/>
            <person name="Johnson M."/>
            <person name="Thiruvilangam P."/>
            <person name="Wilson R."/>
        </authorList>
    </citation>
    <scope>NUCLEOTIDE SEQUENCE [LARGE SCALE GENOMIC DNA]</scope>
    <source>
        <strain>ATCC BAA-1250 / SPB7</strain>
    </source>
</reference>